<feature type="chain" id="PRO_1000185442" description="HTH-type transcriptional regulator UlaR">
    <location>
        <begin position="1"/>
        <end position="251"/>
    </location>
</feature>
<feature type="domain" description="HTH deoR-type" evidence="1">
    <location>
        <begin position="3"/>
        <end position="58"/>
    </location>
</feature>
<feature type="DNA-binding region" description="H-T-H motif" evidence="1">
    <location>
        <begin position="20"/>
        <end position="39"/>
    </location>
</feature>
<protein>
    <recommendedName>
        <fullName evidence="1">HTH-type transcriptional regulator UlaR</fullName>
    </recommendedName>
</protein>
<dbReference type="EMBL" id="FM180568">
    <property type="protein sequence ID" value="CAS12062.1"/>
    <property type="molecule type" value="Genomic_DNA"/>
</dbReference>
<dbReference type="RefSeq" id="WP_000133632.1">
    <property type="nucleotide sequence ID" value="NC_011601.1"/>
</dbReference>
<dbReference type="SMR" id="B7UQK0"/>
<dbReference type="KEGG" id="ecg:E2348C_4514"/>
<dbReference type="HOGENOM" id="CLU_060699_3_2_6"/>
<dbReference type="Proteomes" id="UP000008205">
    <property type="component" value="Chromosome"/>
</dbReference>
<dbReference type="GO" id="GO:0005737">
    <property type="term" value="C:cytoplasm"/>
    <property type="evidence" value="ECO:0007669"/>
    <property type="project" value="UniProtKB-SubCell"/>
</dbReference>
<dbReference type="GO" id="GO:0003677">
    <property type="term" value="F:DNA binding"/>
    <property type="evidence" value="ECO:0007669"/>
    <property type="project" value="UniProtKB-KW"/>
</dbReference>
<dbReference type="GO" id="GO:0003700">
    <property type="term" value="F:DNA-binding transcription factor activity"/>
    <property type="evidence" value="ECO:0007669"/>
    <property type="project" value="InterPro"/>
</dbReference>
<dbReference type="GO" id="GO:0045892">
    <property type="term" value="P:negative regulation of DNA-templated transcription"/>
    <property type="evidence" value="ECO:0007669"/>
    <property type="project" value="UniProtKB-UniRule"/>
</dbReference>
<dbReference type="FunFam" id="1.10.10.10:FF:000160">
    <property type="entry name" value="HTH-type transcriptional regulator UlaR"/>
    <property type="match status" value="1"/>
</dbReference>
<dbReference type="Gene3D" id="1.10.10.10">
    <property type="entry name" value="Winged helix-like DNA-binding domain superfamily/Winged helix DNA-binding domain"/>
    <property type="match status" value="1"/>
</dbReference>
<dbReference type="HAMAP" id="MF_01563">
    <property type="entry name" value="HTH_type_UlaR"/>
    <property type="match status" value="1"/>
</dbReference>
<dbReference type="InterPro" id="IPR050313">
    <property type="entry name" value="Carb_Metab_HTH_regulators"/>
</dbReference>
<dbReference type="InterPro" id="IPR014036">
    <property type="entry name" value="DeoR-like_C"/>
</dbReference>
<dbReference type="InterPro" id="IPR001034">
    <property type="entry name" value="DeoR_HTH"/>
</dbReference>
<dbReference type="InterPro" id="IPR037171">
    <property type="entry name" value="NagB/RpiA_transferase-like"/>
</dbReference>
<dbReference type="InterPro" id="IPR018356">
    <property type="entry name" value="Tscrpt_reg_HTH_DeoR_CS"/>
</dbReference>
<dbReference type="InterPro" id="IPR023711">
    <property type="entry name" value="Tscrpt_reg_HTH_UlaR"/>
</dbReference>
<dbReference type="InterPro" id="IPR036388">
    <property type="entry name" value="WH-like_DNA-bd_sf"/>
</dbReference>
<dbReference type="InterPro" id="IPR036390">
    <property type="entry name" value="WH_DNA-bd_sf"/>
</dbReference>
<dbReference type="NCBIfam" id="NF010034">
    <property type="entry name" value="PRK13509.1"/>
    <property type="match status" value="1"/>
</dbReference>
<dbReference type="PANTHER" id="PTHR30363">
    <property type="entry name" value="HTH-TYPE TRANSCRIPTIONAL REGULATOR SRLR-RELATED"/>
    <property type="match status" value="1"/>
</dbReference>
<dbReference type="PANTHER" id="PTHR30363:SF55">
    <property type="entry name" value="HTH-TYPE TRANSCRIPTIONAL REGULATOR ULAR"/>
    <property type="match status" value="1"/>
</dbReference>
<dbReference type="Pfam" id="PF00455">
    <property type="entry name" value="DeoRC"/>
    <property type="match status" value="1"/>
</dbReference>
<dbReference type="Pfam" id="PF08220">
    <property type="entry name" value="HTH_DeoR"/>
    <property type="match status" value="1"/>
</dbReference>
<dbReference type="PRINTS" id="PR00037">
    <property type="entry name" value="HTHLACR"/>
</dbReference>
<dbReference type="SMART" id="SM01134">
    <property type="entry name" value="DeoRC"/>
    <property type="match status" value="1"/>
</dbReference>
<dbReference type="SMART" id="SM00420">
    <property type="entry name" value="HTH_DEOR"/>
    <property type="match status" value="1"/>
</dbReference>
<dbReference type="SUPFAM" id="SSF100950">
    <property type="entry name" value="NagB/RpiA/CoA transferase-like"/>
    <property type="match status" value="1"/>
</dbReference>
<dbReference type="SUPFAM" id="SSF46785">
    <property type="entry name" value="Winged helix' DNA-binding domain"/>
    <property type="match status" value="1"/>
</dbReference>
<dbReference type="PROSITE" id="PS00894">
    <property type="entry name" value="HTH_DEOR_1"/>
    <property type="match status" value="1"/>
</dbReference>
<dbReference type="PROSITE" id="PS51000">
    <property type="entry name" value="HTH_DEOR_2"/>
    <property type="match status" value="1"/>
</dbReference>
<sequence>MTEAQRHQILLEMLAQLGFVTVEKVVERLGISPATARRDINKLDESGKLKKVRNGAEAITQQRPRWTPMNLHQAQNHDEKVRIAKAASQLVNPGESVVINCGSTAFLLGREMCGKPVQIITNYLPLANYLIDQEHDSVIIMGGQYNKSQSITLSPQGSENSLYAGHWMFTSGKGLTAEGLYKTDMLTAMAEQKMLSVVGKLVVLVDSSKIGERAGMLFSRADQIDMLITGKNANPEILQQLEAQGVSIMRV</sequence>
<evidence type="ECO:0000255" key="1">
    <source>
        <dbReference type="HAMAP-Rule" id="MF_01563"/>
    </source>
</evidence>
<comment type="function">
    <text evidence="1">Represses ulaG and the ulaABCDEF operon.</text>
</comment>
<comment type="subcellular location">
    <subcellularLocation>
        <location evidence="1">Cytoplasm</location>
    </subcellularLocation>
</comment>
<organism>
    <name type="scientific">Escherichia coli O127:H6 (strain E2348/69 / EPEC)</name>
    <dbReference type="NCBI Taxonomy" id="574521"/>
    <lineage>
        <taxon>Bacteria</taxon>
        <taxon>Pseudomonadati</taxon>
        <taxon>Pseudomonadota</taxon>
        <taxon>Gammaproteobacteria</taxon>
        <taxon>Enterobacterales</taxon>
        <taxon>Enterobacteriaceae</taxon>
        <taxon>Escherichia</taxon>
    </lineage>
</organism>
<name>ULAR_ECO27</name>
<reference key="1">
    <citation type="journal article" date="2009" name="J. Bacteriol.">
        <title>Complete genome sequence and comparative genome analysis of enteropathogenic Escherichia coli O127:H6 strain E2348/69.</title>
        <authorList>
            <person name="Iguchi A."/>
            <person name="Thomson N.R."/>
            <person name="Ogura Y."/>
            <person name="Saunders D."/>
            <person name="Ooka T."/>
            <person name="Henderson I.R."/>
            <person name="Harris D."/>
            <person name="Asadulghani M."/>
            <person name="Kurokawa K."/>
            <person name="Dean P."/>
            <person name="Kenny B."/>
            <person name="Quail M.A."/>
            <person name="Thurston S."/>
            <person name="Dougan G."/>
            <person name="Hayashi T."/>
            <person name="Parkhill J."/>
            <person name="Frankel G."/>
        </authorList>
    </citation>
    <scope>NUCLEOTIDE SEQUENCE [LARGE SCALE GENOMIC DNA]</scope>
    <source>
        <strain>E2348/69 / EPEC</strain>
    </source>
</reference>
<gene>
    <name evidence="1" type="primary">ulaR</name>
    <name type="ordered locus">E2348C_4514</name>
</gene>
<accession>B7UQK0</accession>
<proteinExistence type="inferred from homology"/>
<keyword id="KW-0963">Cytoplasm</keyword>
<keyword id="KW-0238">DNA-binding</keyword>
<keyword id="KW-1185">Reference proteome</keyword>
<keyword id="KW-0678">Repressor</keyword>
<keyword id="KW-0804">Transcription</keyword>
<keyword id="KW-0805">Transcription regulation</keyword>